<evidence type="ECO:0000255" key="1"/>
<evidence type="ECO:0000255" key="2">
    <source>
        <dbReference type="HAMAP-Rule" id="MF_01260"/>
    </source>
</evidence>
<dbReference type="EC" id="3.1.1.85" evidence="2"/>
<dbReference type="EMBL" id="AM421808">
    <property type="protein sequence ID" value="CAM09578.1"/>
    <property type="molecule type" value="Genomic_DNA"/>
</dbReference>
<dbReference type="SMR" id="A1KRU9"/>
<dbReference type="ESTHER" id="neime-NMA2216">
    <property type="family name" value="BioH"/>
</dbReference>
<dbReference type="KEGG" id="nmc:NMC0264"/>
<dbReference type="HOGENOM" id="CLU_020336_12_2_4"/>
<dbReference type="UniPathway" id="UPA00078"/>
<dbReference type="Proteomes" id="UP000002286">
    <property type="component" value="Chromosome"/>
</dbReference>
<dbReference type="GO" id="GO:0005737">
    <property type="term" value="C:cytoplasm"/>
    <property type="evidence" value="ECO:0007669"/>
    <property type="project" value="UniProtKB-SubCell"/>
</dbReference>
<dbReference type="GO" id="GO:0016020">
    <property type="term" value="C:membrane"/>
    <property type="evidence" value="ECO:0007669"/>
    <property type="project" value="TreeGrafter"/>
</dbReference>
<dbReference type="GO" id="GO:0090499">
    <property type="term" value="F:pimelyl-[acyl-carrier protein] methyl ester esterase activity"/>
    <property type="evidence" value="ECO:0007669"/>
    <property type="project" value="UniProtKB-EC"/>
</dbReference>
<dbReference type="GO" id="GO:0009102">
    <property type="term" value="P:biotin biosynthetic process"/>
    <property type="evidence" value="ECO:0007669"/>
    <property type="project" value="UniProtKB-UniRule"/>
</dbReference>
<dbReference type="FunFam" id="3.40.50.1820:FF:000523">
    <property type="entry name" value="Pimeloyl-[acyl-carrier protein] methyl ester esterase"/>
    <property type="match status" value="1"/>
</dbReference>
<dbReference type="Gene3D" id="3.40.50.1820">
    <property type="entry name" value="alpha/beta hydrolase"/>
    <property type="match status" value="1"/>
</dbReference>
<dbReference type="HAMAP" id="MF_01260">
    <property type="entry name" value="Carboxylester"/>
    <property type="match status" value="1"/>
</dbReference>
<dbReference type="InterPro" id="IPR000073">
    <property type="entry name" value="AB_hydrolase_1"/>
</dbReference>
<dbReference type="InterPro" id="IPR029058">
    <property type="entry name" value="AB_hydrolase_fold"/>
</dbReference>
<dbReference type="InterPro" id="IPR050266">
    <property type="entry name" value="AB_hydrolase_sf"/>
</dbReference>
<dbReference type="InterPro" id="IPR010076">
    <property type="entry name" value="BioH"/>
</dbReference>
<dbReference type="NCBIfam" id="TIGR01738">
    <property type="entry name" value="bioH"/>
    <property type="match status" value="1"/>
</dbReference>
<dbReference type="PANTHER" id="PTHR43798:SF31">
    <property type="entry name" value="AB HYDROLASE SUPERFAMILY PROTEIN YCLE"/>
    <property type="match status" value="1"/>
</dbReference>
<dbReference type="PANTHER" id="PTHR43798">
    <property type="entry name" value="MONOACYLGLYCEROL LIPASE"/>
    <property type="match status" value="1"/>
</dbReference>
<dbReference type="Pfam" id="PF00561">
    <property type="entry name" value="Abhydrolase_1"/>
    <property type="match status" value="1"/>
</dbReference>
<dbReference type="SUPFAM" id="SSF53474">
    <property type="entry name" value="alpha/beta-Hydrolases"/>
    <property type="match status" value="1"/>
</dbReference>
<protein>
    <recommendedName>
        <fullName evidence="2">Pimeloyl-[acyl-carrier protein] methyl ester esterase</fullName>
        <ecNumber evidence="2">3.1.1.85</ecNumber>
    </recommendedName>
    <alternativeName>
        <fullName evidence="2">Biotin synthesis protein BioH</fullName>
    </alternativeName>
    <alternativeName>
        <fullName evidence="2">Carboxylesterase BioH</fullName>
    </alternativeName>
</protein>
<feature type="chain" id="PRO_1000067272" description="Pimeloyl-[acyl-carrier protein] methyl ester esterase">
    <location>
        <begin position="1"/>
        <end position="256"/>
    </location>
</feature>
<feature type="domain" description="AB hydrolase-1" evidence="1">
    <location>
        <begin position="17"/>
        <end position="241"/>
    </location>
</feature>
<feature type="active site" description="Nucleophile" evidence="2">
    <location>
        <position position="83"/>
    </location>
</feature>
<feature type="active site" evidence="2">
    <location>
        <position position="207"/>
    </location>
</feature>
<feature type="active site" evidence="2">
    <location>
        <position position="235"/>
    </location>
</feature>
<feature type="binding site" evidence="2">
    <location>
        <position position="23"/>
    </location>
    <ligand>
        <name>substrate</name>
    </ligand>
</feature>
<feature type="binding site" evidence="2">
    <location>
        <begin position="83"/>
        <end position="84"/>
    </location>
    <ligand>
        <name>substrate</name>
    </ligand>
</feature>
<feature type="binding site" evidence="2">
    <location>
        <begin position="145"/>
        <end position="149"/>
    </location>
    <ligand>
        <name>substrate</name>
    </ligand>
</feature>
<feature type="binding site" evidence="2">
    <location>
        <position position="235"/>
    </location>
    <ligand>
        <name>substrate</name>
    </ligand>
</feature>
<keyword id="KW-0093">Biotin biosynthesis</keyword>
<keyword id="KW-0963">Cytoplasm</keyword>
<keyword id="KW-0378">Hydrolase</keyword>
<keyword id="KW-0719">Serine esterase</keyword>
<accession>A1KRU9</accession>
<organism>
    <name type="scientific">Neisseria meningitidis serogroup C / serotype 2a (strain ATCC 700532 / DSM 15464 / FAM18)</name>
    <dbReference type="NCBI Taxonomy" id="272831"/>
    <lineage>
        <taxon>Bacteria</taxon>
        <taxon>Pseudomonadati</taxon>
        <taxon>Pseudomonadota</taxon>
        <taxon>Betaproteobacteria</taxon>
        <taxon>Neisseriales</taxon>
        <taxon>Neisseriaceae</taxon>
        <taxon>Neisseria</taxon>
    </lineage>
</organism>
<name>BIOH_NEIMF</name>
<sequence length="256" mass="27908">MRRQRERKSMPDAVKKVYLIHGWGANRHMFDDLMPRLPATWPVSAVDLPGHGDAPFAQPFDIEAAADAVAAQIDTPADILGWSLGGLVALYLAARHPDKVRSLCLTASFARLTAAEDYPEGLAAPALGKMVGAFRSDYAKHIKQFLQLQLLHTPDADGIIGRILPDLARCGTPSALQEALDAAERADARHLLDKIDVPVLLVFGGKDAITPPRMGEYLHRHLKGSRLVVMEKAAHAPFLSHAEAFAALYRDFVEGV</sequence>
<comment type="function">
    <text evidence="2">The physiological role of BioH is to remove the methyl group introduced by BioC when the pimeloyl moiety is complete. It allows to synthesize pimeloyl-ACP via the fatty acid synthetic pathway through the hydrolysis of the ester bonds of pimeloyl-ACP esters.</text>
</comment>
<comment type="catalytic activity">
    <reaction evidence="2">
        <text>6-carboxyhexanoyl-[ACP] methyl ester + H2O = 6-carboxyhexanoyl-[ACP] + methanol + H(+)</text>
        <dbReference type="Rhea" id="RHEA:42700"/>
        <dbReference type="Rhea" id="RHEA-COMP:9955"/>
        <dbReference type="Rhea" id="RHEA-COMP:10186"/>
        <dbReference type="ChEBI" id="CHEBI:15377"/>
        <dbReference type="ChEBI" id="CHEBI:15378"/>
        <dbReference type="ChEBI" id="CHEBI:17790"/>
        <dbReference type="ChEBI" id="CHEBI:78846"/>
        <dbReference type="ChEBI" id="CHEBI:82735"/>
        <dbReference type="EC" id="3.1.1.85"/>
    </reaction>
</comment>
<comment type="pathway">
    <text evidence="2">Cofactor biosynthesis; biotin biosynthesis.</text>
</comment>
<comment type="subunit">
    <text evidence="2">Monomer.</text>
</comment>
<comment type="subcellular location">
    <subcellularLocation>
        <location evidence="2">Cytoplasm</location>
    </subcellularLocation>
</comment>
<comment type="similarity">
    <text evidence="2">Belongs to the AB hydrolase superfamily. Carboxylesterase BioH family.</text>
</comment>
<gene>
    <name evidence="2" type="primary">bioH</name>
    <name type="ordered locus">NMC0264</name>
</gene>
<proteinExistence type="inferred from homology"/>
<reference key="1">
    <citation type="journal article" date="2007" name="PLoS Genet.">
        <title>Meningococcal genetic variation mechanisms viewed through comparative analysis of serogroup C strain FAM18.</title>
        <authorList>
            <person name="Bentley S.D."/>
            <person name="Vernikos G.S."/>
            <person name="Snyder L.A.S."/>
            <person name="Churcher C."/>
            <person name="Arrowsmith C."/>
            <person name="Chillingworth T."/>
            <person name="Cronin A."/>
            <person name="Davis P.H."/>
            <person name="Holroyd N.E."/>
            <person name="Jagels K."/>
            <person name="Maddison M."/>
            <person name="Moule S."/>
            <person name="Rabbinowitsch E."/>
            <person name="Sharp S."/>
            <person name="Unwin L."/>
            <person name="Whitehead S."/>
            <person name="Quail M.A."/>
            <person name="Achtman M."/>
            <person name="Barrell B.G."/>
            <person name="Saunders N.J."/>
            <person name="Parkhill J."/>
        </authorList>
    </citation>
    <scope>NUCLEOTIDE SEQUENCE [LARGE SCALE GENOMIC DNA]</scope>
    <source>
        <strain>ATCC 700532 / DSM 15464 / FAM18</strain>
    </source>
</reference>